<name>S38AB_MOUSE</name>
<dbReference type="EMBL" id="AK139966">
    <property type="protein sequence ID" value="BAE24200.1"/>
    <property type="status" value="ALT_FRAME"/>
    <property type="molecule type" value="mRNA"/>
</dbReference>
<dbReference type="EMBL" id="AL928621">
    <property type="protein sequence ID" value="CAM23396.1"/>
    <property type="status" value="ALT_SEQ"/>
    <property type="molecule type" value="Genomic_DNA"/>
</dbReference>
<dbReference type="EMBL" id="AL929132">
    <property type="protein sequence ID" value="CAM23396.1"/>
    <property type="status" value="JOINED"/>
    <property type="molecule type" value="Genomic_DNA"/>
</dbReference>
<dbReference type="EMBL" id="AL928621">
    <property type="protein sequence ID" value="CAM23397.1"/>
    <property type="status" value="ALT_SEQ"/>
    <property type="molecule type" value="Genomic_DNA"/>
</dbReference>
<dbReference type="EMBL" id="AL929132">
    <property type="protein sequence ID" value="CAM23397.1"/>
    <property type="status" value="JOINED"/>
    <property type="molecule type" value="Genomic_DNA"/>
</dbReference>
<dbReference type="CCDS" id="CCDS38129.1">
    <molecule id="Q3USY0-1"/>
</dbReference>
<dbReference type="RefSeq" id="NP_796048.2">
    <molecule id="Q3USY0-1"/>
    <property type="nucleotide sequence ID" value="NM_177074.2"/>
</dbReference>
<dbReference type="RefSeq" id="XP_036018189.1">
    <molecule id="Q3USY0-3"/>
    <property type="nucleotide sequence ID" value="XM_036162296.1"/>
</dbReference>
<dbReference type="SMR" id="Q3USY0"/>
<dbReference type="FunCoup" id="Q3USY0">
    <property type="interactions" value="28"/>
</dbReference>
<dbReference type="STRING" id="10090.ENSMUSP00000108039"/>
<dbReference type="GlyCosmos" id="Q3USY0">
    <property type="glycosylation" value="2 sites, No reported glycans"/>
</dbReference>
<dbReference type="GlyGen" id="Q3USY0">
    <property type="glycosylation" value="2 sites"/>
</dbReference>
<dbReference type="iPTMnet" id="Q3USY0"/>
<dbReference type="PhosphoSitePlus" id="Q3USY0"/>
<dbReference type="PaxDb" id="10090-ENSMUSP00000108039"/>
<dbReference type="ProteomicsDB" id="260780">
    <molecule id="Q3USY0-1"/>
</dbReference>
<dbReference type="ProteomicsDB" id="260781">
    <molecule id="Q3USY0-2"/>
</dbReference>
<dbReference type="ProteomicsDB" id="260782">
    <molecule id="Q3USY0-3"/>
</dbReference>
<dbReference type="Antibodypedia" id="47970">
    <property type="antibodies" value="7 antibodies from 6 providers"/>
</dbReference>
<dbReference type="DNASU" id="320106"/>
<dbReference type="Ensembl" id="ENSMUST00000112420.8">
    <molecule id="Q3USY0-1"/>
    <property type="protein sequence ID" value="ENSMUSP00000108039.2"/>
    <property type="gene ID" value="ENSMUSG00000061171.16"/>
</dbReference>
<dbReference type="GeneID" id="320106"/>
<dbReference type="KEGG" id="mmu:320106"/>
<dbReference type="UCSC" id="uc008jwj.1">
    <molecule id="Q3USY0-1"/>
    <property type="organism name" value="mouse"/>
</dbReference>
<dbReference type="AGR" id="MGI:2443383"/>
<dbReference type="CTD" id="151258"/>
<dbReference type="MGI" id="MGI:2443383">
    <property type="gene designation" value="Slc38a11"/>
</dbReference>
<dbReference type="VEuPathDB" id="HostDB:ENSMUSG00000061171"/>
<dbReference type="eggNOG" id="KOG1305">
    <property type="taxonomic scope" value="Eukaryota"/>
</dbReference>
<dbReference type="GeneTree" id="ENSGT00940000157782"/>
<dbReference type="InParanoid" id="Q3USY0"/>
<dbReference type="OMA" id="FLFFGSQ"/>
<dbReference type="OrthoDB" id="28208at2759"/>
<dbReference type="PhylomeDB" id="Q3USY0"/>
<dbReference type="TreeFam" id="TF328787"/>
<dbReference type="BioGRID-ORCS" id="320106">
    <property type="hits" value="3 hits in 79 CRISPR screens"/>
</dbReference>
<dbReference type="ChiTaRS" id="Slc38a11">
    <property type="organism name" value="mouse"/>
</dbReference>
<dbReference type="PRO" id="PR:Q3USY0"/>
<dbReference type="Proteomes" id="UP000000589">
    <property type="component" value="Chromosome 2"/>
</dbReference>
<dbReference type="RNAct" id="Q3USY0">
    <property type="molecule type" value="protein"/>
</dbReference>
<dbReference type="Bgee" id="ENSMUSG00000061171">
    <property type="expression patterns" value="Expressed in adrenal gland and 54 other cell types or tissues"/>
</dbReference>
<dbReference type="ExpressionAtlas" id="Q3USY0">
    <property type="expression patterns" value="baseline and differential"/>
</dbReference>
<dbReference type="GO" id="GO:0016020">
    <property type="term" value="C:membrane"/>
    <property type="evidence" value="ECO:0007669"/>
    <property type="project" value="UniProtKB-SubCell"/>
</dbReference>
<dbReference type="GO" id="GO:0006865">
    <property type="term" value="P:amino acid transport"/>
    <property type="evidence" value="ECO:0007669"/>
    <property type="project" value="UniProtKB-KW"/>
</dbReference>
<dbReference type="GO" id="GO:0006814">
    <property type="term" value="P:sodium ion transport"/>
    <property type="evidence" value="ECO:0007669"/>
    <property type="project" value="UniProtKB-KW"/>
</dbReference>
<dbReference type="InterPro" id="IPR013057">
    <property type="entry name" value="AA_transpt_TM"/>
</dbReference>
<dbReference type="PANTHER" id="PTHR22950">
    <property type="entry name" value="AMINO ACID TRANSPORTER"/>
    <property type="match status" value="1"/>
</dbReference>
<dbReference type="PANTHER" id="PTHR22950:SF458">
    <property type="entry name" value="SODIUM-COUPLED NEUTRAL AMINO ACID TRANSPORTER 11-RELATED"/>
    <property type="match status" value="1"/>
</dbReference>
<dbReference type="Pfam" id="PF01490">
    <property type="entry name" value="Aa_trans"/>
    <property type="match status" value="1"/>
</dbReference>
<comment type="function">
    <text evidence="1">Putative sodium-dependent amino acid/proton antiporter.</text>
</comment>
<comment type="subcellular location">
    <subcellularLocation>
        <location evidence="4">Membrane</location>
        <topology evidence="4">Multi-pass membrane protein</topology>
    </subcellularLocation>
</comment>
<comment type="alternative products">
    <event type="alternative splicing"/>
    <isoform>
        <id>Q3USY0-1</id>
        <name>1</name>
        <sequence type="displayed"/>
    </isoform>
    <isoform>
        <id>Q3USY0-2</id>
        <name>2</name>
        <sequence type="described" ref="VSP_032530"/>
    </isoform>
    <isoform>
        <id>Q3USY0-3</id>
        <name>3</name>
        <sequence type="described" ref="VSP_032531"/>
    </isoform>
</comment>
<comment type="similarity">
    <text evidence="4">Belongs to the amino acid/polyamine transporter 2 family.</text>
</comment>
<comment type="sequence caution" evidence="4">
    <conflict type="frameshift">
        <sequence resource="EMBL-CDS" id="BAE24200"/>
    </conflict>
</comment>
<comment type="sequence caution" evidence="4">
    <conflict type="erroneous gene model prediction">
        <sequence resource="EMBL-CDS" id="CAM23396"/>
    </conflict>
</comment>
<comment type="sequence caution" evidence="4">
    <conflict type="erroneous gene model prediction">
        <sequence resource="EMBL-CDS" id="CAM23397"/>
    </conflict>
</comment>
<organism>
    <name type="scientific">Mus musculus</name>
    <name type="common">Mouse</name>
    <dbReference type="NCBI Taxonomy" id="10090"/>
    <lineage>
        <taxon>Eukaryota</taxon>
        <taxon>Metazoa</taxon>
        <taxon>Chordata</taxon>
        <taxon>Craniata</taxon>
        <taxon>Vertebrata</taxon>
        <taxon>Euteleostomi</taxon>
        <taxon>Mammalia</taxon>
        <taxon>Eutheria</taxon>
        <taxon>Euarchontoglires</taxon>
        <taxon>Glires</taxon>
        <taxon>Rodentia</taxon>
        <taxon>Myomorpha</taxon>
        <taxon>Muroidea</taxon>
        <taxon>Muridae</taxon>
        <taxon>Murinae</taxon>
        <taxon>Mus</taxon>
        <taxon>Mus</taxon>
    </lineage>
</organism>
<gene>
    <name type="primary">Slc38a11</name>
</gene>
<protein>
    <recommendedName>
        <fullName>Putative sodium-coupled neutral amino acid transporter 11</fullName>
    </recommendedName>
    <alternativeName>
        <fullName>Solute carrier family 38 member 11</fullName>
    </alternativeName>
</protein>
<reference key="1">
    <citation type="journal article" date="2005" name="Science">
        <title>The transcriptional landscape of the mammalian genome.</title>
        <authorList>
            <person name="Carninci P."/>
            <person name="Kasukawa T."/>
            <person name="Katayama S."/>
            <person name="Gough J."/>
            <person name="Frith M.C."/>
            <person name="Maeda N."/>
            <person name="Oyama R."/>
            <person name="Ravasi T."/>
            <person name="Lenhard B."/>
            <person name="Wells C."/>
            <person name="Kodzius R."/>
            <person name="Shimokawa K."/>
            <person name="Bajic V.B."/>
            <person name="Brenner S.E."/>
            <person name="Batalov S."/>
            <person name="Forrest A.R."/>
            <person name="Zavolan M."/>
            <person name="Davis M.J."/>
            <person name="Wilming L.G."/>
            <person name="Aidinis V."/>
            <person name="Allen J.E."/>
            <person name="Ambesi-Impiombato A."/>
            <person name="Apweiler R."/>
            <person name="Aturaliya R.N."/>
            <person name="Bailey T.L."/>
            <person name="Bansal M."/>
            <person name="Baxter L."/>
            <person name="Beisel K.W."/>
            <person name="Bersano T."/>
            <person name="Bono H."/>
            <person name="Chalk A.M."/>
            <person name="Chiu K.P."/>
            <person name="Choudhary V."/>
            <person name="Christoffels A."/>
            <person name="Clutterbuck D.R."/>
            <person name="Crowe M.L."/>
            <person name="Dalla E."/>
            <person name="Dalrymple B.P."/>
            <person name="de Bono B."/>
            <person name="Della Gatta G."/>
            <person name="di Bernardo D."/>
            <person name="Down T."/>
            <person name="Engstrom P."/>
            <person name="Fagiolini M."/>
            <person name="Faulkner G."/>
            <person name="Fletcher C.F."/>
            <person name="Fukushima T."/>
            <person name="Furuno M."/>
            <person name="Futaki S."/>
            <person name="Gariboldi M."/>
            <person name="Georgii-Hemming P."/>
            <person name="Gingeras T.R."/>
            <person name="Gojobori T."/>
            <person name="Green R.E."/>
            <person name="Gustincich S."/>
            <person name="Harbers M."/>
            <person name="Hayashi Y."/>
            <person name="Hensch T.K."/>
            <person name="Hirokawa N."/>
            <person name="Hill D."/>
            <person name="Huminiecki L."/>
            <person name="Iacono M."/>
            <person name="Ikeo K."/>
            <person name="Iwama A."/>
            <person name="Ishikawa T."/>
            <person name="Jakt M."/>
            <person name="Kanapin A."/>
            <person name="Katoh M."/>
            <person name="Kawasawa Y."/>
            <person name="Kelso J."/>
            <person name="Kitamura H."/>
            <person name="Kitano H."/>
            <person name="Kollias G."/>
            <person name="Krishnan S.P."/>
            <person name="Kruger A."/>
            <person name="Kummerfeld S.K."/>
            <person name="Kurochkin I.V."/>
            <person name="Lareau L.F."/>
            <person name="Lazarevic D."/>
            <person name="Lipovich L."/>
            <person name="Liu J."/>
            <person name="Liuni S."/>
            <person name="McWilliam S."/>
            <person name="Madan Babu M."/>
            <person name="Madera M."/>
            <person name="Marchionni L."/>
            <person name="Matsuda H."/>
            <person name="Matsuzawa S."/>
            <person name="Miki H."/>
            <person name="Mignone F."/>
            <person name="Miyake S."/>
            <person name="Morris K."/>
            <person name="Mottagui-Tabar S."/>
            <person name="Mulder N."/>
            <person name="Nakano N."/>
            <person name="Nakauchi H."/>
            <person name="Ng P."/>
            <person name="Nilsson R."/>
            <person name="Nishiguchi S."/>
            <person name="Nishikawa S."/>
            <person name="Nori F."/>
            <person name="Ohara O."/>
            <person name="Okazaki Y."/>
            <person name="Orlando V."/>
            <person name="Pang K.C."/>
            <person name="Pavan W.J."/>
            <person name="Pavesi G."/>
            <person name="Pesole G."/>
            <person name="Petrovsky N."/>
            <person name="Piazza S."/>
            <person name="Reed J."/>
            <person name="Reid J.F."/>
            <person name="Ring B.Z."/>
            <person name="Ringwald M."/>
            <person name="Rost B."/>
            <person name="Ruan Y."/>
            <person name="Salzberg S.L."/>
            <person name="Sandelin A."/>
            <person name="Schneider C."/>
            <person name="Schoenbach C."/>
            <person name="Sekiguchi K."/>
            <person name="Semple C.A."/>
            <person name="Seno S."/>
            <person name="Sessa L."/>
            <person name="Sheng Y."/>
            <person name="Shibata Y."/>
            <person name="Shimada H."/>
            <person name="Shimada K."/>
            <person name="Silva D."/>
            <person name="Sinclair B."/>
            <person name="Sperling S."/>
            <person name="Stupka E."/>
            <person name="Sugiura K."/>
            <person name="Sultana R."/>
            <person name="Takenaka Y."/>
            <person name="Taki K."/>
            <person name="Tammoja K."/>
            <person name="Tan S.L."/>
            <person name="Tang S."/>
            <person name="Taylor M.S."/>
            <person name="Tegner J."/>
            <person name="Teichmann S.A."/>
            <person name="Ueda H.R."/>
            <person name="van Nimwegen E."/>
            <person name="Verardo R."/>
            <person name="Wei C.L."/>
            <person name="Yagi K."/>
            <person name="Yamanishi H."/>
            <person name="Zabarovsky E."/>
            <person name="Zhu S."/>
            <person name="Zimmer A."/>
            <person name="Hide W."/>
            <person name="Bult C."/>
            <person name="Grimmond S.M."/>
            <person name="Teasdale R.D."/>
            <person name="Liu E.T."/>
            <person name="Brusic V."/>
            <person name="Quackenbush J."/>
            <person name="Wahlestedt C."/>
            <person name="Mattick J.S."/>
            <person name="Hume D.A."/>
            <person name="Kai C."/>
            <person name="Sasaki D."/>
            <person name="Tomaru Y."/>
            <person name="Fukuda S."/>
            <person name="Kanamori-Katayama M."/>
            <person name="Suzuki M."/>
            <person name="Aoki J."/>
            <person name="Arakawa T."/>
            <person name="Iida J."/>
            <person name="Imamura K."/>
            <person name="Itoh M."/>
            <person name="Kato T."/>
            <person name="Kawaji H."/>
            <person name="Kawagashira N."/>
            <person name="Kawashima T."/>
            <person name="Kojima M."/>
            <person name="Kondo S."/>
            <person name="Konno H."/>
            <person name="Nakano K."/>
            <person name="Ninomiya N."/>
            <person name="Nishio T."/>
            <person name="Okada M."/>
            <person name="Plessy C."/>
            <person name="Shibata K."/>
            <person name="Shiraki T."/>
            <person name="Suzuki S."/>
            <person name="Tagami M."/>
            <person name="Waki K."/>
            <person name="Watahiki A."/>
            <person name="Okamura-Oho Y."/>
            <person name="Suzuki H."/>
            <person name="Kawai J."/>
            <person name="Hayashizaki Y."/>
        </authorList>
    </citation>
    <scope>NUCLEOTIDE SEQUENCE [LARGE SCALE MRNA] (ISOFORM 1)</scope>
    <source>
        <strain>C57BL/6J</strain>
        <tissue>Corpora quadrigemina</tissue>
    </source>
</reference>
<reference key="2">
    <citation type="journal article" date="2009" name="PLoS Biol.">
        <title>Lineage-specific biology revealed by a finished genome assembly of the mouse.</title>
        <authorList>
            <person name="Church D.M."/>
            <person name="Goodstadt L."/>
            <person name="Hillier L.W."/>
            <person name="Zody M.C."/>
            <person name="Goldstein S."/>
            <person name="She X."/>
            <person name="Bult C.J."/>
            <person name="Agarwala R."/>
            <person name="Cherry J.L."/>
            <person name="DiCuccio M."/>
            <person name="Hlavina W."/>
            <person name="Kapustin Y."/>
            <person name="Meric P."/>
            <person name="Maglott D."/>
            <person name="Birtle Z."/>
            <person name="Marques A.C."/>
            <person name="Graves T."/>
            <person name="Zhou S."/>
            <person name="Teague B."/>
            <person name="Potamousis K."/>
            <person name="Churas C."/>
            <person name="Place M."/>
            <person name="Herschleb J."/>
            <person name="Runnheim R."/>
            <person name="Forrest D."/>
            <person name="Amos-Landgraf J."/>
            <person name="Schwartz D.C."/>
            <person name="Cheng Z."/>
            <person name="Lindblad-Toh K."/>
            <person name="Eichler E.E."/>
            <person name="Ponting C.P."/>
        </authorList>
    </citation>
    <scope>NUCLEOTIDE SEQUENCE [LARGE SCALE GENOMIC DNA]</scope>
    <source>
        <strain>C57BL/6J</strain>
    </source>
</reference>
<proteinExistence type="evidence at transcript level"/>
<accession>Q3USY0</accession>
<accession>A2ASI0</accession>
<accession>A2ASI1</accession>
<evidence type="ECO:0000250" key="1"/>
<evidence type="ECO:0000255" key="2"/>
<evidence type="ECO:0000256" key="3">
    <source>
        <dbReference type="SAM" id="MobiDB-lite"/>
    </source>
</evidence>
<evidence type="ECO:0000305" key="4"/>
<sequence>MSYQQPQLSGPLQRETDSSDRESLISGHEHGGKSSQSAAVFNVVNSVIGSGIIGLPYSMKQAGFPLGILLLFLVSYITDFSLVLLIKGGALSGTDSYQSLVNKTFGFPGYLLLSTLQFMYPFIAMISYNIITGDTLSKVFQRLPGVDPGGWFISRHFIIVVSTVTCTLPLSLYRDIAKLGKISFISTILTTVILGIVMTRAISLGPNIPKTDNAWVFAKPNAIQAIGVMSFAFICHHNCFLVYGSLEEPTVAKWRRIIHTSILVSVFICVLFATCGYFTFTGFTQGDLFENYCRSDDLVTFGRFCYGITVILTYPIECFVTREVIANVFFGGTLSSVFHTVLAVLIVTAATLVSLMIECLGIVLELNGVLCAAPLIFIIPSACYLKLSEEPRTHSDKIMACVMFPVGAVVMVVGFVMAITNPQDCTHGQEMFYCFPENVSFTNTSWSHLQLTT</sequence>
<feature type="chain" id="PRO_0000326061" description="Putative sodium-coupled neutral amino acid transporter 11">
    <location>
        <begin position="1"/>
        <end position="453"/>
    </location>
</feature>
<feature type="transmembrane region" description="Helical" evidence="2">
    <location>
        <begin position="39"/>
        <end position="59"/>
    </location>
</feature>
<feature type="transmembrane region" description="Helical" evidence="2">
    <location>
        <begin position="66"/>
        <end position="86"/>
    </location>
</feature>
<feature type="transmembrane region" description="Helical" evidence="2">
    <location>
        <begin position="106"/>
        <end position="126"/>
    </location>
</feature>
<feature type="transmembrane region" description="Helical" evidence="2">
    <location>
        <begin position="150"/>
        <end position="170"/>
    </location>
</feature>
<feature type="transmembrane region" description="Helical" evidence="2">
    <location>
        <begin position="179"/>
        <end position="199"/>
    </location>
</feature>
<feature type="transmembrane region" description="Helical" evidence="2">
    <location>
        <begin position="222"/>
        <end position="242"/>
    </location>
</feature>
<feature type="transmembrane region" description="Helical" evidence="2">
    <location>
        <begin position="262"/>
        <end position="282"/>
    </location>
</feature>
<feature type="transmembrane region" description="Helical" evidence="2">
    <location>
        <begin position="299"/>
        <end position="319"/>
    </location>
</feature>
<feature type="transmembrane region" description="Helical" evidence="2">
    <location>
        <begin position="337"/>
        <end position="357"/>
    </location>
</feature>
<feature type="transmembrane region" description="Helical" evidence="2">
    <location>
        <begin position="359"/>
        <end position="379"/>
    </location>
</feature>
<feature type="transmembrane region" description="Helical" evidence="2">
    <location>
        <begin position="398"/>
        <end position="418"/>
    </location>
</feature>
<feature type="region of interest" description="Disordered" evidence="3">
    <location>
        <begin position="1"/>
        <end position="34"/>
    </location>
</feature>
<feature type="compositionally biased region" description="Polar residues" evidence="3">
    <location>
        <begin position="1"/>
        <end position="10"/>
    </location>
</feature>
<feature type="compositionally biased region" description="Basic and acidic residues" evidence="3">
    <location>
        <begin position="14"/>
        <end position="32"/>
    </location>
</feature>
<feature type="glycosylation site" description="N-linked (GlcNAc...) asparagine" evidence="2">
    <location>
        <position position="438"/>
    </location>
</feature>
<feature type="glycosylation site" description="N-linked (GlcNAc...) asparagine" evidence="2">
    <location>
        <position position="443"/>
    </location>
</feature>
<feature type="splice variant" id="VSP_032530" description="In isoform 2." evidence="4">
    <location>
        <begin position="54"/>
        <end position="78"/>
    </location>
</feature>
<feature type="splice variant" id="VSP_032531" description="In isoform 3." evidence="4">
    <location>
        <begin position="124"/>
        <end position="145"/>
    </location>
</feature>
<keyword id="KW-0025">Alternative splicing</keyword>
<keyword id="KW-0029">Amino-acid transport</keyword>
<keyword id="KW-0325">Glycoprotein</keyword>
<keyword id="KW-0406">Ion transport</keyword>
<keyword id="KW-0472">Membrane</keyword>
<keyword id="KW-1185">Reference proteome</keyword>
<keyword id="KW-0915">Sodium</keyword>
<keyword id="KW-0739">Sodium transport</keyword>
<keyword id="KW-0812">Transmembrane</keyword>
<keyword id="KW-1133">Transmembrane helix</keyword>
<keyword id="KW-0813">Transport</keyword>